<protein>
    <recommendedName>
        <fullName evidence="1">Elongation factor G</fullName>
        <shortName evidence="1">EF-G</shortName>
    </recommendedName>
</protein>
<keyword id="KW-0963">Cytoplasm</keyword>
<keyword id="KW-0251">Elongation factor</keyword>
<keyword id="KW-0342">GTP-binding</keyword>
<keyword id="KW-0547">Nucleotide-binding</keyword>
<keyword id="KW-0648">Protein biosynthesis</keyword>
<proteinExistence type="inferred from homology"/>
<sequence>MAQDVLTDLNKVRNIGIMAHIDAGKTTTTERILYYTGITHKIGEVHDGAATMDWMAQEQERGITITSAATTCFWNKNQINIIDTPGHVDFTVEVERSLRVLDGAVAVFDGKEGVEPQSETVWRQADKYDVPRICFVNKMDKLGADFYFTVDTIINRLGAKPLVIQLPIGSEGGFEGVIDLVEMRALTWRGDSKGDVELGAKYDIEEIPADLQDKADEYRAKLLETVAETDDSLLEKYFGGEELTVAEIKAAIRKLTVNSEIYPVLCGSAFKNRGVQPMLDAVIDYLPSPLDVPPMEGHDVRDEEKIIIRKPDSTEPFSALAFKVAVHPFFGRLTYVRVYSGTIASGSQVINSTKGKKERIGKIFQMHSNKENPVDSVTAGHIYAVIGLKDTTTGDTLCDPQDQIVLESMTFPEPVIEVAIEPKTKADQEKLGVAIQKLAEEDPTFRTEQNQETGQTVIKGMGELHLDILVDRMKREFNVEANVGKPQVAYRETIRGTVDKHDFTHKKQTGGSGQFAKIQIKIEPMEVTAEKTYEFDNKVTGGRVPREYIPSVDAGIQDALQVGILAGYPMVGVKATLLDGAAHDVDSSEMAFKIAGSMAFKEAARKAKPVLLEPLMAVEVRTPEEYMGDVIGDLNSRRGQIQAMEDASGVKVITANVPLSEMFGYVGDLRSKTSGRAVYSMSFGSYAEVPKAVADEIVQKNKGE</sequence>
<evidence type="ECO:0000255" key="1">
    <source>
        <dbReference type="HAMAP-Rule" id="MF_00054"/>
    </source>
</evidence>
<feature type="chain" id="PRO_0000335837" description="Elongation factor G">
    <location>
        <begin position="1"/>
        <end position="704"/>
    </location>
</feature>
<feature type="domain" description="tr-type G">
    <location>
        <begin position="10"/>
        <end position="290"/>
    </location>
</feature>
<feature type="binding site" evidence="1">
    <location>
        <begin position="19"/>
        <end position="26"/>
    </location>
    <ligand>
        <name>GTP</name>
        <dbReference type="ChEBI" id="CHEBI:37565"/>
    </ligand>
</feature>
<feature type="binding site" evidence="1">
    <location>
        <begin position="83"/>
        <end position="87"/>
    </location>
    <ligand>
        <name>GTP</name>
        <dbReference type="ChEBI" id="CHEBI:37565"/>
    </ligand>
</feature>
<feature type="binding site" evidence="1">
    <location>
        <begin position="137"/>
        <end position="140"/>
    </location>
    <ligand>
        <name>GTP</name>
        <dbReference type="ChEBI" id="CHEBI:37565"/>
    </ligand>
</feature>
<accession>A5CUB7</accession>
<name>EFG_CLAM3</name>
<organism>
    <name type="scientific">Clavibacter michiganensis subsp. michiganensis (strain NCPPB 382)</name>
    <dbReference type="NCBI Taxonomy" id="443906"/>
    <lineage>
        <taxon>Bacteria</taxon>
        <taxon>Bacillati</taxon>
        <taxon>Actinomycetota</taxon>
        <taxon>Actinomycetes</taxon>
        <taxon>Micrococcales</taxon>
        <taxon>Microbacteriaceae</taxon>
        <taxon>Clavibacter</taxon>
    </lineage>
</organism>
<comment type="function">
    <text evidence="1">Catalyzes the GTP-dependent ribosomal translocation step during translation elongation. During this step, the ribosome changes from the pre-translocational (PRE) to the post-translocational (POST) state as the newly formed A-site-bound peptidyl-tRNA and P-site-bound deacylated tRNA move to the P and E sites, respectively. Catalyzes the coordinated movement of the two tRNA molecules, the mRNA and conformational changes in the ribosome.</text>
</comment>
<comment type="subcellular location">
    <subcellularLocation>
        <location evidence="1">Cytoplasm</location>
    </subcellularLocation>
</comment>
<comment type="similarity">
    <text evidence="1">Belongs to the TRAFAC class translation factor GTPase superfamily. Classic translation factor GTPase family. EF-G/EF-2 subfamily.</text>
</comment>
<reference key="1">
    <citation type="journal article" date="2008" name="J. Bacteriol.">
        <title>The genome sequence of the tomato-pathogenic actinomycete Clavibacter michiganensis subsp. michiganensis NCPPB382 reveals a large island involved in pathogenicity.</title>
        <authorList>
            <person name="Gartemann K.-H."/>
            <person name="Abt B."/>
            <person name="Bekel T."/>
            <person name="Burger A."/>
            <person name="Engemann J."/>
            <person name="Fluegel M."/>
            <person name="Gaigalat L."/>
            <person name="Goesmann A."/>
            <person name="Graefen I."/>
            <person name="Kalinowski J."/>
            <person name="Kaup O."/>
            <person name="Kirchner O."/>
            <person name="Krause L."/>
            <person name="Linke B."/>
            <person name="McHardy A."/>
            <person name="Meyer F."/>
            <person name="Pohle S."/>
            <person name="Rueckert C."/>
            <person name="Schneiker S."/>
            <person name="Zellermann E.-M."/>
            <person name="Puehler A."/>
            <person name="Eichenlaub R."/>
            <person name="Kaiser O."/>
            <person name="Bartels D."/>
        </authorList>
    </citation>
    <scope>NUCLEOTIDE SEQUENCE [LARGE SCALE GENOMIC DNA]</scope>
    <source>
        <strain>NCPPB 382</strain>
    </source>
</reference>
<gene>
    <name evidence="1" type="primary">fusA</name>
    <name type="ordered locus">CMM_2621</name>
</gene>
<dbReference type="EMBL" id="AM711867">
    <property type="protein sequence ID" value="CAN02704.1"/>
    <property type="molecule type" value="Genomic_DNA"/>
</dbReference>
<dbReference type="RefSeq" id="WP_012039310.1">
    <property type="nucleotide sequence ID" value="NC_009480.1"/>
</dbReference>
<dbReference type="SMR" id="A5CUB7"/>
<dbReference type="KEGG" id="cmi:CMM_2621"/>
<dbReference type="eggNOG" id="COG0480">
    <property type="taxonomic scope" value="Bacteria"/>
</dbReference>
<dbReference type="HOGENOM" id="CLU_002794_4_1_11"/>
<dbReference type="OrthoDB" id="9801472at2"/>
<dbReference type="Proteomes" id="UP000001564">
    <property type="component" value="Chromosome"/>
</dbReference>
<dbReference type="GO" id="GO:0005737">
    <property type="term" value="C:cytoplasm"/>
    <property type="evidence" value="ECO:0007669"/>
    <property type="project" value="UniProtKB-SubCell"/>
</dbReference>
<dbReference type="GO" id="GO:0005525">
    <property type="term" value="F:GTP binding"/>
    <property type="evidence" value="ECO:0007669"/>
    <property type="project" value="UniProtKB-UniRule"/>
</dbReference>
<dbReference type="GO" id="GO:0003924">
    <property type="term" value="F:GTPase activity"/>
    <property type="evidence" value="ECO:0007669"/>
    <property type="project" value="InterPro"/>
</dbReference>
<dbReference type="GO" id="GO:0003746">
    <property type="term" value="F:translation elongation factor activity"/>
    <property type="evidence" value="ECO:0007669"/>
    <property type="project" value="UniProtKB-UniRule"/>
</dbReference>
<dbReference type="GO" id="GO:0032790">
    <property type="term" value="P:ribosome disassembly"/>
    <property type="evidence" value="ECO:0007669"/>
    <property type="project" value="TreeGrafter"/>
</dbReference>
<dbReference type="CDD" id="cd01886">
    <property type="entry name" value="EF-G"/>
    <property type="match status" value="1"/>
</dbReference>
<dbReference type="CDD" id="cd16262">
    <property type="entry name" value="EFG_III"/>
    <property type="match status" value="1"/>
</dbReference>
<dbReference type="CDD" id="cd01434">
    <property type="entry name" value="EFG_mtEFG1_IV"/>
    <property type="match status" value="1"/>
</dbReference>
<dbReference type="CDD" id="cd03713">
    <property type="entry name" value="EFG_mtEFG_C"/>
    <property type="match status" value="1"/>
</dbReference>
<dbReference type="CDD" id="cd04088">
    <property type="entry name" value="EFG_mtEFG_II"/>
    <property type="match status" value="1"/>
</dbReference>
<dbReference type="FunFam" id="2.40.30.10:FF:000006">
    <property type="entry name" value="Elongation factor G"/>
    <property type="match status" value="1"/>
</dbReference>
<dbReference type="FunFam" id="3.30.230.10:FF:000003">
    <property type="entry name" value="Elongation factor G"/>
    <property type="match status" value="1"/>
</dbReference>
<dbReference type="FunFam" id="3.30.70.240:FF:000001">
    <property type="entry name" value="Elongation factor G"/>
    <property type="match status" value="1"/>
</dbReference>
<dbReference type="FunFam" id="3.30.70.870:FF:000001">
    <property type="entry name" value="Elongation factor G"/>
    <property type="match status" value="1"/>
</dbReference>
<dbReference type="FunFam" id="3.40.50.300:FF:000029">
    <property type="entry name" value="Elongation factor G"/>
    <property type="match status" value="1"/>
</dbReference>
<dbReference type="Gene3D" id="3.30.230.10">
    <property type="match status" value="1"/>
</dbReference>
<dbReference type="Gene3D" id="3.30.70.240">
    <property type="match status" value="1"/>
</dbReference>
<dbReference type="Gene3D" id="3.30.70.870">
    <property type="entry name" value="Elongation Factor G (Translational Gtpase), domain 3"/>
    <property type="match status" value="1"/>
</dbReference>
<dbReference type="Gene3D" id="3.40.50.300">
    <property type="entry name" value="P-loop containing nucleotide triphosphate hydrolases"/>
    <property type="match status" value="1"/>
</dbReference>
<dbReference type="Gene3D" id="2.40.30.10">
    <property type="entry name" value="Translation factors"/>
    <property type="match status" value="1"/>
</dbReference>
<dbReference type="HAMAP" id="MF_00054_B">
    <property type="entry name" value="EF_G_EF_2_B"/>
    <property type="match status" value="1"/>
</dbReference>
<dbReference type="InterPro" id="IPR041095">
    <property type="entry name" value="EFG_II"/>
</dbReference>
<dbReference type="InterPro" id="IPR009022">
    <property type="entry name" value="EFG_III"/>
</dbReference>
<dbReference type="InterPro" id="IPR035647">
    <property type="entry name" value="EFG_III/V"/>
</dbReference>
<dbReference type="InterPro" id="IPR047872">
    <property type="entry name" value="EFG_IV"/>
</dbReference>
<dbReference type="InterPro" id="IPR035649">
    <property type="entry name" value="EFG_V"/>
</dbReference>
<dbReference type="InterPro" id="IPR000640">
    <property type="entry name" value="EFG_V-like"/>
</dbReference>
<dbReference type="InterPro" id="IPR004161">
    <property type="entry name" value="EFTu-like_2"/>
</dbReference>
<dbReference type="InterPro" id="IPR031157">
    <property type="entry name" value="G_TR_CS"/>
</dbReference>
<dbReference type="InterPro" id="IPR027417">
    <property type="entry name" value="P-loop_NTPase"/>
</dbReference>
<dbReference type="InterPro" id="IPR020568">
    <property type="entry name" value="Ribosomal_Su5_D2-typ_SF"/>
</dbReference>
<dbReference type="InterPro" id="IPR014721">
    <property type="entry name" value="Ribsml_uS5_D2-typ_fold_subgr"/>
</dbReference>
<dbReference type="InterPro" id="IPR005225">
    <property type="entry name" value="Small_GTP-bd"/>
</dbReference>
<dbReference type="InterPro" id="IPR000795">
    <property type="entry name" value="T_Tr_GTP-bd_dom"/>
</dbReference>
<dbReference type="InterPro" id="IPR009000">
    <property type="entry name" value="Transl_B-barrel_sf"/>
</dbReference>
<dbReference type="InterPro" id="IPR004540">
    <property type="entry name" value="Transl_elong_EFG/EF2"/>
</dbReference>
<dbReference type="InterPro" id="IPR005517">
    <property type="entry name" value="Transl_elong_EFG/EF2_IV"/>
</dbReference>
<dbReference type="NCBIfam" id="TIGR00484">
    <property type="entry name" value="EF-G"/>
    <property type="match status" value="1"/>
</dbReference>
<dbReference type="NCBIfam" id="NF009381">
    <property type="entry name" value="PRK12740.1-5"/>
    <property type="match status" value="1"/>
</dbReference>
<dbReference type="NCBIfam" id="TIGR00231">
    <property type="entry name" value="small_GTP"/>
    <property type="match status" value="1"/>
</dbReference>
<dbReference type="PANTHER" id="PTHR43261:SF1">
    <property type="entry name" value="RIBOSOME-RELEASING FACTOR 2, MITOCHONDRIAL"/>
    <property type="match status" value="1"/>
</dbReference>
<dbReference type="PANTHER" id="PTHR43261">
    <property type="entry name" value="TRANSLATION ELONGATION FACTOR G-RELATED"/>
    <property type="match status" value="1"/>
</dbReference>
<dbReference type="Pfam" id="PF00679">
    <property type="entry name" value="EFG_C"/>
    <property type="match status" value="1"/>
</dbReference>
<dbReference type="Pfam" id="PF14492">
    <property type="entry name" value="EFG_III"/>
    <property type="match status" value="1"/>
</dbReference>
<dbReference type="Pfam" id="PF03764">
    <property type="entry name" value="EFG_IV"/>
    <property type="match status" value="1"/>
</dbReference>
<dbReference type="Pfam" id="PF00009">
    <property type="entry name" value="GTP_EFTU"/>
    <property type="match status" value="1"/>
</dbReference>
<dbReference type="Pfam" id="PF03144">
    <property type="entry name" value="GTP_EFTU_D2"/>
    <property type="match status" value="1"/>
</dbReference>
<dbReference type="PRINTS" id="PR00315">
    <property type="entry name" value="ELONGATNFCT"/>
</dbReference>
<dbReference type="SMART" id="SM00838">
    <property type="entry name" value="EFG_C"/>
    <property type="match status" value="1"/>
</dbReference>
<dbReference type="SMART" id="SM00889">
    <property type="entry name" value="EFG_IV"/>
    <property type="match status" value="1"/>
</dbReference>
<dbReference type="SUPFAM" id="SSF54980">
    <property type="entry name" value="EF-G C-terminal domain-like"/>
    <property type="match status" value="2"/>
</dbReference>
<dbReference type="SUPFAM" id="SSF52540">
    <property type="entry name" value="P-loop containing nucleoside triphosphate hydrolases"/>
    <property type="match status" value="1"/>
</dbReference>
<dbReference type="SUPFAM" id="SSF54211">
    <property type="entry name" value="Ribosomal protein S5 domain 2-like"/>
    <property type="match status" value="1"/>
</dbReference>
<dbReference type="SUPFAM" id="SSF50447">
    <property type="entry name" value="Translation proteins"/>
    <property type="match status" value="1"/>
</dbReference>
<dbReference type="PROSITE" id="PS00301">
    <property type="entry name" value="G_TR_1"/>
    <property type="match status" value="1"/>
</dbReference>
<dbReference type="PROSITE" id="PS51722">
    <property type="entry name" value="G_TR_2"/>
    <property type="match status" value="1"/>
</dbReference>